<accession>A0KSH7</accession>
<gene>
    <name evidence="1" type="primary">ubiD</name>
    <name type="ordered locus">Shewana3_0506</name>
</gene>
<protein>
    <recommendedName>
        <fullName evidence="1">3-octaprenyl-4-hydroxybenzoate carboxy-lyase</fullName>
        <ecNumber evidence="1">4.1.1.98</ecNumber>
    </recommendedName>
    <alternativeName>
        <fullName evidence="1">Polyprenyl p-hydroxybenzoate decarboxylase</fullName>
    </alternativeName>
</protein>
<keyword id="KW-1003">Cell membrane</keyword>
<keyword id="KW-0210">Decarboxylase</keyword>
<keyword id="KW-0285">Flavoprotein</keyword>
<keyword id="KW-0288">FMN</keyword>
<keyword id="KW-0456">Lyase</keyword>
<keyword id="KW-0464">Manganese</keyword>
<keyword id="KW-0472">Membrane</keyword>
<keyword id="KW-0479">Metal-binding</keyword>
<keyword id="KW-0831">Ubiquinone biosynthesis</keyword>
<feature type="chain" id="PRO_1000069864" description="3-octaprenyl-4-hydroxybenzoate carboxy-lyase">
    <location>
        <begin position="1"/>
        <end position="493"/>
    </location>
</feature>
<feature type="active site" description="Proton donor" evidence="1">
    <location>
        <position position="287"/>
    </location>
</feature>
<feature type="binding site" evidence="1">
    <location>
        <position position="172"/>
    </location>
    <ligand>
        <name>Mn(2+)</name>
        <dbReference type="ChEBI" id="CHEBI:29035"/>
    </ligand>
</feature>
<feature type="binding site" evidence="1">
    <location>
        <begin position="175"/>
        <end position="177"/>
    </location>
    <ligand>
        <name>prenylated FMN</name>
        <dbReference type="ChEBI" id="CHEBI:87746"/>
    </ligand>
</feature>
<feature type="binding site" evidence="1">
    <location>
        <begin position="189"/>
        <end position="191"/>
    </location>
    <ligand>
        <name>prenylated FMN</name>
        <dbReference type="ChEBI" id="CHEBI:87746"/>
    </ligand>
</feature>
<feature type="binding site" evidence="1">
    <location>
        <begin position="194"/>
        <end position="195"/>
    </location>
    <ligand>
        <name>prenylated FMN</name>
        <dbReference type="ChEBI" id="CHEBI:87746"/>
    </ligand>
</feature>
<feature type="binding site" evidence="1">
    <location>
        <position position="238"/>
    </location>
    <ligand>
        <name>Mn(2+)</name>
        <dbReference type="ChEBI" id="CHEBI:29035"/>
    </ligand>
</feature>
<sequence length="493" mass="55494">MSFKDLRSFIDHLEANGELKRISYPVDPHLEMTEIADRVLRAKGPALLFENPTNHSMPVLANLFGTPKRVAMALGKEDPLALRDVGELLAFLKEPEPPRGFKDAISKIPMFKQALNMPPKTVRNPACQQVVKTGDEVDLTQLPIQHCWPGDVAPLVTWGLTITKGPRKSRQNLGIYRQQLLGKNKLIMRWLSHRGGALDFADFKEQFPGERYPVVVALGSDPVTILGAVTPVPDAMSEYAFAGLLRGERTEVCKALSCDLEVPASSEIILEGYIDPDEMAEEGPYGDHTGYYNETDKFPVFTVTHITHRKDPIYHSTYTGRPPDEPAMLGVALNEVFVPILRKQYPEIIDFYLPPEGCSYRMAVISIRKQYPGHAKRVMMGAWSFLRQFMYTKFIVVVDDDVNCRDWNDVIWAITTRMDPKRDTVMIDNTPIDYLDFASPVAGLGSKMGLDATNKWEGETNREWGTPIVMDPKVKQKIDSIWDELGIDDSPTL</sequence>
<evidence type="ECO:0000255" key="1">
    <source>
        <dbReference type="HAMAP-Rule" id="MF_01636"/>
    </source>
</evidence>
<reference key="1">
    <citation type="submission" date="2006-09" db="EMBL/GenBank/DDBJ databases">
        <title>Complete sequence of chromosome 1 of Shewanella sp. ANA-3.</title>
        <authorList>
            <person name="Copeland A."/>
            <person name="Lucas S."/>
            <person name="Lapidus A."/>
            <person name="Barry K."/>
            <person name="Detter J.C."/>
            <person name="Glavina del Rio T."/>
            <person name="Hammon N."/>
            <person name="Israni S."/>
            <person name="Dalin E."/>
            <person name="Tice H."/>
            <person name="Pitluck S."/>
            <person name="Chertkov O."/>
            <person name="Brettin T."/>
            <person name="Bruce D."/>
            <person name="Han C."/>
            <person name="Tapia R."/>
            <person name="Gilna P."/>
            <person name="Schmutz J."/>
            <person name="Larimer F."/>
            <person name="Land M."/>
            <person name="Hauser L."/>
            <person name="Kyrpides N."/>
            <person name="Kim E."/>
            <person name="Newman D."/>
            <person name="Salticov C."/>
            <person name="Konstantinidis K."/>
            <person name="Klappenback J."/>
            <person name="Tiedje J."/>
            <person name="Richardson P."/>
        </authorList>
    </citation>
    <scope>NUCLEOTIDE SEQUENCE [LARGE SCALE GENOMIC DNA]</scope>
    <source>
        <strain>ANA-3</strain>
    </source>
</reference>
<comment type="function">
    <text evidence="1">Catalyzes the decarboxylation of 3-octaprenyl-4-hydroxy benzoate to 2-octaprenylphenol, an intermediate step in ubiquinone biosynthesis.</text>
</comment>
<comment type="catalytic activity">
    <reaction evidence="1">
        <text>a 4-hydroxy-3-(all-trans-polyprenyl)benzoate + H(+) = a 2-(all-trans-polyprenyl)phenol + CO2</text>
        <dbReference type="Rhea" id="RHEA:41680"/>
        <dbReference type="Rhea" id="RHEA-COMP:9514"/>
        <dbReference type="Rhea" id="RHEA-COMP:9516"/>
        <dbReference type="ChEBI" id="CHEBI:1269"/>
        <dbReference type="ChEBI" id="CHEBI:15378"/>
        <dbReference type="ChEBI" id="CHEBI:16526"/>
        <dbReference type="ChEBI" id="CHEBI:78396"/>
        <dbReference type="EC" id="4.1.1.98"/>
    </reaction>
</comment>
<comment type="cofactor">
    <cofactor evidence="1">
        <name>prenylated FMN</name>
        <dbReference type="ChEBI" id="CHEBI:87746"/>
    </cofactor>
    <text evidence="1">Binds 1 prenylated FMN per subunit.</text>
</comment>
<comment type="cofactor">
    <cofactor evidence="1">
        <name>Mn(2+)</name>
        <dbReference type="ChEBI" id="CHEBI:29035"/>
    </cofactor>
</comment>
<comment type="pathway">
    <text evidence="1">Cofactor biosynthesis; ubiquinone biosynthesis.</text>
</comment>
<comment type="subunit">
    <text evidence="1">Homohexamer.</text>
</comment>
<comment type="subcellular location">
    <subcellularLocation>
        <location evidence="1">Cell membrane</location>
        <topology evidence="1">Peripheral membrane protein</topology>
    </subcellularLocation>
</comment>
<comment type="similarity">
    <text evidence="1">Belongs to the UbiD family.</text>
</comment>
<organism>
    <name type="scientific">Shewanella sp. (strain ANA-3)</name>
    <dbReference type="NCBI Taxonomy" id="94122"/>
    <lineage>
        <taxon>Bacteria</taxon>
        <taxon>Pseudomonadati</taxon>
        <taxon>Pseudomonadota</taxon>
        <taxon>Gammaproteobacteria</taxon>
        <taxon>Alteromonadales</taxon>
        <taxon>Shewanellaceae</taxon>
        <taxon>Shewanella</taxon>
    </lineage>
</organism>
<proteinExistence type="inferred from homology"/>
<dbReference type="EC" id="4.1.1.98" evidence="1"/>
<dbReference type="EMBL" id="CP000469">
    <property type="protein sequence ID" value="ABK46746.1"/>
    <property type="molecule type" value="Genomic_DNA"/>
</dbReference>
<dbReference type="RefSeq" id="WP_011627318.1">
    <property type="nucleotide sequence ID" value="NC_008577.1"/>
</dbReference>
<dbReference type="SMR" id="A0KSH7"/>
<dbReference type="STRING" id="94122.Shewana3_0506"/>
<dbReference type="GeneID" id="94726496"/>
<dbReference type="KEGG" id="shn:Shewana3_0506"/>
<dbReference type="eggNOG" id="COG0043">
    <property type="taxonomic scope" value="Bacteria"/>
</dbReference>
<dbReference type="HOGENOM" id="CLU_023348_4_1_6"/>
<dbReference type="OrthoDB" id="9809841at2"/>
<dbReference type="UniPathway" id="UPA00232"/>
<dbReference type="Proteomes" id="UP000002589">
    <property type="component" value="Chromosome"/>
</dbReference>
<dbReference type="GO" id="GO:0005829">
    <property type="term" value="C:cytosol"/>
    <property type="evidence" value="ECO:0007669"/>
    <property type="project" value="TreeGrafter"/>
</dbReference>
<dbReference type="GO" id="GO:0005886">
    <property type="term" value="C:plasma membrane"/>
    <property type="evidence" value="ECO:0007669"/>
    <property type="project" value="UniProtKB-SubCell"/>
</dbReference>
<dbReference type="GO" id="GO:0008694">
    <property type="term" value="F:3-octaprenyl-4-hydroxybenzoate carboxy-lyase activity"/>
    <property type="evidence" value="ECO:0007669"/>
    <property type="project" value="UniProtKB-UniRule"/>
</dbReference>
<dbReference type="GO" id="GO:0046872">
    <property type="term" value="F:metal ion binding"/>
    <property type="evidence" value="ECO:0007669"/>
    <property type="project" value="UniProtKB-KW"/>
</dbReference>
<dbReference type="GO" id="GO:0006744">
    <property type="term" value="P:ubiquinone biosynthetic process"/>
    <property type="evidence" value="ECO:0007669"/>
    <property type="project" value="UniProtKB-UniRule"/>
</dbReference>
<dbReference type="FunFam" id="1.20.5.570:FF:000001">
    <property type="entry name" value="3-octaprenyl-4-hydroxybenzoate carboxy-lyase"/>
    <property type="match status" value="1"/>
</dbReference>
<dbReference type="FunFam" id="3.40.1670.10:FF:000001">
    <property type="entry name" value="3-octaprenyl-4-hydroxybenzoate carboxy-lyase"/>
    <property type="match status" value="1"/>
</dbReference>
<dbReference type="Gene3D" id="1.20.5.570">
    <property type="entry name" value="Single helix bin"/>
    <property type="match status" value="1"/>
</dbReference>
<dbReference type="Gene3D" id="3.40.1670.10">
    <property type="entry name" value="UbiD C-terminal domain-like"/>
    <property type="match status" value="1"/>
</dbReference>
<dbReference type="HAMAP" id="MF_01636">
    <property type="entry name" value="UbiD"/>
    <property type="match status" value="1"/>
</dbReference>
<dbReference type="InterPro" id="IPR002830">
    <property type="entry name" value="UbiD"/>
</dbReference>
<dbReference type="InterPro" id="IPR049381">
    <property type="entry name" value="UbiD-like_C"/>
</dbReference>
<dbReference type="InterPro" id="IPR049383">
    <property type="entry name" value="UbiD-like_N"/>
</dbReference>
<dbReference type="InterPro" id="IPR023677">
    <property type="entry name" value="UbiD_bacteria"/>
</dbReference>
<dbReference type="InterPro" id="IPR048304">
    <property type="entry name" value="UbiD_Rift_dom"/>
</dbReference>
<dbReference type="NCBIfam" id="NF008175">
    <property type="entry name" value="PRK10922.1"/>
    <property type="match status" value="1"/>
</dbReference>
<dbReference type="NCBIfam" id="TIGR00148">
    <property type="entry name" value="UbiD family decarboxylase"/>
    <property type="match status" value="1"/>
</dbReference>
<dbReference type="PANTHER" id="PTHR30108">
    <property type="entry name" value="3-OCTAPRENYL-4-HYDROXYBENZOATE CARBOXY-LYASE-RELATED"/>
    <property type="match status" value="1"/>
</dbReference>
<dbReference type="PANTHER" id="PTHR30108:SF17">
    <property type="entry name" value="FERULIC ACID DECARBOXYLASE 1"/>
    <property type="match status" value="1"/>
</dbReference>
<dbReference type="Pfam" id="PF01977">
    <property type="entry name" value="UbiD"/>
    <property type="match status" value="1"/>
</dbReference>
<dbReference type="Pfam" id="PF20696">
    <property type="entry name" value="UbiD_C"/>
    <property type="match status" value="1"/>
</dbReference>
<dbReference type="Pfam" id="PF20695">
    <property type="entry name" value="UbiD_N"/>
    <property type="match status" value="1"/>
</dbReference>
<dbReference type="SUPFAM" id="SSF50475">
    <property type="entry name" value="FMN-binding split barrel"/>
    <property type="match status" value="1"/>
</dbReference>
<dbReference type="SUPFAM" id="SSF143968">
    <property type="entry name" value="UbiD C-terminal domain-like"/>
    <property type="match status" value="1"/>
</dbReference>
<name>UBID_SHESA</name>